<dbReference type="EC" id="3.1.1.11"/>
<dbReference type="EMBL" id="AF296834">
    <property type="status" value="NOT_ANNOTATED_CDS"/>
    <property type="molecule type" value="Genomic_DNA"/>
</dbReference>
<dbReference type="EMBL" id="CP002688">
    <property type="protein sequence ID" value="AED92898.1"/>
    <property type="molecule type" value="Genomic_DNA"/>
</dbReference>
<dbReference type="RefSeq" id="NP_197586.1">
    <property type="nucleotide sequence ID" value="NM_122093.1"/>
</dbReference>
<dbReference type="SMR" id="Q3E989"/>
<dbReference type="FunCoup" id="Q3E989">
    <property type="interactions" value="62"/>
</dbReference>
<dbReference type="STRING" id="3702.Q3E989"/>
<dbReference type="GlyCosmos" id="Q3E989">
    <property type="glycosylation" value="2 sites, No reported glycans"/>
</dbReference>
<dbReference type="GlyGen" id="Q3E989">
    <property type="glycosylation" value="3 sites"/>
</dbReference>
<dbReference type="PaxDb" id="3702-AT5G20860.1"/>
<dbReference type="EnsemblPlants" id="AT5G20860.1">
    <property type="protein sequence ID" value="AT5G20860.1"/>
    <property type="gene ID" value="AT5G20860"/>
</dbReference>
<dbReference type="GeneID" id="832209"/>
<dbReference type="Gramene" id="AT5G20860.1">
    <property type="protein sequence ID" value="AT5G20860.1"/>
    <property type="gene ID" value="AT5G20860"/>
</dbReference>
<dbReference type="KEGG" id="ath:AT5G20860"/>
<dbReference type="Araport" id="AT5G20860"/>
<dbReference type="TAIR" id="AT5G20860"/>
<dbReference type="eggNOG" id="ENOG502QQSD">
    <property type="taxonomic scope" value="Eukaryota"/>
</dbReference>
<dbReference type="HOGENOM" id="CLU_012243_9_1_1"/>
<dbReference type="InParanoid" id="Q3E989"/>
<dbReference type="PhylomeDB" id="Q3E989"/>
<dbReference type="UniPathway" id="UPA00545">
    <property type="reaction ID" value="UER00823"/>
</dbReference>
<dbReference type="PRO" id="PR:Q3E989"/>
<dbReference type="Proteomes" id="UP000006548">
    <property type="component" value="Chromosome 5"/>
</dbReference>
<dbReference type="ExpressionAtlas" id="Q3E989">
    <property type="expression patterns" value="baseline and differential"/>
</dbReference>
<dbReference type="GO" id="GO:0005576">
    <property type="term" value="C:extracellular region"/>
    <property type="evidence" value="ECO:0007669"/>
    <property type="project" value="UniProtKB-KW"/>
</dbReference>
<dbReference type="GO" id="GO:0004857">
    <property type="term" value="F:enzyme inhibitor activity"/>
    <property type="evidence" value="ECO:0007669"/>
    <property type="project" value="InterPro"/>
</dbReference>
<dbReference type="GO" id="GO:0030599">
    <property type="term" value="F:pectinesterase activity"/>
    <property type="evidence" value="ECO:0007669"/>
    <property type="project" value="UniProtKB-EC"/>
</dbReference>
<dbReference type="GO" id="GO:0042545">
    <property type="term" value="P:cell wall modification"/>
    <property type="evidence" value="ECO:0007669"/>
    <property type="project" value="InterPro"/>
</dbReference>
<dbReference type="GO" id="GO:0045490">
    <property type="term" value="P:pectin catabolic process"/>
    <property type="evidence" value="ECO:0007669"/>
    <property type="project" value="UniProtKB-UniPathway"/>
</dbReference>
<dbReference type="CDD" id="cd15798">
    <property type="entry name" value="PMEI-like_3"/>
    <property type="match status" value="1"/>
</dbReference>
<dbReference type="FunFam" id="1.20.140.40:FF:000024">
    <property type="entry name" value="Pectinesterase"/>
    <property type="match status" value="1"/>
</dbReference>
<dbReference type="FunFam" id="2.160.20.10:FF:000029">
    <property type="entry name" value="Pectinesterase 4"/>
    <property type="match status" value="1"/>
</dbReference>
<dbReference type="Gene3D" id="1.20.140.40">
    <property type="entry name" value="Invertase/pectin methylesterase inhibitor family protein"/>
    <property type="match status" value="1"/>
</dbReference>
<dbReference type="Gene3D" id="2.160.20.10">
    <property type="entry name" value="Single-stranded right-handed beta-helix, Pectin lyase-like"/>
    <property type="match status" value="1"/>
</dbReference>
<dbReference type="InterPro" id="IPR035513">
    <property type="entry name" value="Invertase/methylesterase_inhib"/>
</dbReference>
<dbReference type="InterPro" id="IPR012334">
    <property type="entry name" value="Pectin_lyas_fold"/>
</dbReference>
<dbReference type="InterPro" id="IPR011050">
    <property type="entry name" value="Pectin_lyase_fold/virulence"/>
</dbReference>
<dbReference type="InterPro" id="IPR033131">
    <property type="entry name" value="Pectinesterase_Asp_AS"/>
</dbReference>
<dbReference type="InterPro" id="IPR000070">
    <property type="entry name" value="Pectinesterase_cat"/>
</dbReference>
<dbReference type="InterPro" id="IPR006501">
    <property type="entry name" value="Pectinesterase_inhib_dom"/>
</dbReference>
<dbReference type="NCBIfam" id="TIGR01614">
    <property type="entry name" value="PME_inhib"/>
    <property type="match status" value="1"/>
</dbReference>
<dbReference type="PANTHER" id="PTHR31707">
    <property type="entry name" value="PECTINESTERASE"/>
    <property type="match status" value="1"/>
</dbReference>
<dbReference type="Pfam" id="PF01095">
    <property type="entry name" value="Pectinesterase"/>
    <property type="match status" value="1"/>
</dbReference>
<dbReference type="Pfam" id="PF04043">
    <property type="entry name" value="PMEI"/>
    <property type="match status" value="1"/>
</dbReference>
<dbReference type="SMART" id="SM00856">
    <property type="entry name" value="PMEI"/>
    <property type="match status" value="1"/>
</dbReference>
<dbReference type="SUPFAM" id="SSF51126">
    <property type="entry name" value="Pectin lyase-like"/>
    <property type="match status" value="1"/>
</dbReference>
<dbReference type="SUPFAM" id="SSF101148">
    <property type="entry name" value="Plant invertase/pectin methylesterase inhibitor"/>
    <property type="match status" value="1"/>
</dbReference>
<dbReference type="PROSITE" id="PS00503">
    <property type="entry name" value="PECTINESTERASE_2"/>
    <property type="match status" value="1"/>
</dbReference>
<name>PME54_ARATH</name>
<keyword id="KW-0063">Aspartyl esterase</keyword>
<keyword id="KW-0134">Cell wall</keyword>
<keyword id="KW-0961">Cell wall biogenesis/degradation</keyword>
<keyword id="KW-1015">Disulfide bond</keyword>
<keyword id="KW-0325">Glycoprotein</keyword>
<keyword id="KW-0378">Hydrolase</keyword>
<keyword id="KW-1185">Reference proteome</keyword>
<keyword id="KW-0964">Secreted</keyword>
<keyword id="KW-0732">Signal</keyword>
<feature type="signal peptide" evidence="2">
    <location>
        <begin position="1"/>
        <end position="24"/>
    </location>
</feature>
<feature type="chain" id="PRO_0000371702" description="Probable pectinesterase/pectinesterase inhibitor 54">
    <location>
        <begin position="25"/>
        <end position="512"/>
    </location>
</feature>
<feature type="region of interest" description="Pectinesterase inhibitor 54">
    <location>
        <begin position="29"/>
        <end position="193"/>
    </location>
</feature>
<feature type="region of interest" description="Pectinesterase 54">
    <location>
        <begin position="229"/>
        <end position="496"/>
    </location>
</feature>
<feature type="active site" description="Proton donor; for pectinesterase activity" evidence="3">
    <location>
        <position position="325"/>
    </location>
</feature>
<feature type="active site" description="Nucleophile; for pectinesterase activity" evidence="3">
    <location>
        <position position="346"/>
    </location>
</feature>
<feature type="binding site" evidence="1">
    <location>
        <position position="302"/>
    </location>
    <ligand>
        <name>substrate</name>
        <note>for pectinesterase activity</note>
    </ligand>
</feature>
<feature type="binding site" evidence="1">
    <location>
        <position position="415"/>
    </location>
    <ligand>
        <name>substrate</name>
        <note>for pectinesterase activity</note>
    </ligand>
</feature>
<feature type="binding site" evidence="1">
    <location>
        <position position="417"/>
    </location>
    <ligand>
        <name>substrate</name>
        <note>for pectinesterase activity</note>
    </ligand>
</feature>
<feature type="site" description="Transition state stabilizer" evidence="1">
    <location>
        <position position="324"/>
    </location>
</feature>
<feature type="glycosylation site" description="N-linked (GlcNAc...) asparagine" evidence="2">
    <location>
        <position position="71"/>
    </location>
</feature>
<feature type="glycosylation site" description="N-linked (GlcNAc...) asparagine" evidence="2">
    <location>
        <position position="131"/>
    </location>
</feature>
<feature type="disulfide bond" evidence="1">
    <location>
        <begin position="339"/>
        <end position="359"/>
    </location>
</feature>
<proteinExistence type="evidence at transcript level"/>
<gene>
    <name type="primary">PME54</name>
    <name type="synonym">ARATH54</name>
    <name type="ordered locus">At5g20860</name>
    <name type="ORF">F22D1.30</name>
</gene>
<protein>
    <recommendedName>
        <fullName>Probable pectinesterase/pectinesterase inhibitor 54</fullName>
    </recommendedName>
    <domain>
        <recommendedName>
            <fullName>Pectinesterase inhibitor 54</fullName>
        </recommendedName>
        <alternativeName>
            <fullName>Pectin methylesterase inhibitor 54</fullName>
        </alternativeName>
    </domain>
    <domain>
        <recommendedName>
            <fullName>Pectinesterase 54</fullName>
            <shortName>PE 54</shortName>
            <ecNumber>3.1.1.11</ecNumber>
        </recommendedName>
        <alternativeName>
            <fullName>Pectin methylesterase 54</fullName>
            <shortName>AtPME54</shortName>
        </alternativeName>
    </domain>
</protein>
<comment type="function">
    <text evidence="1">Acts in the modification of cell walls via demethylesterification of cell wall pectin.</text>
</comment>
<comment type="catalytic activity">
    <reaction>
        <text>[(1-&gt;4)-alpha-D-galacturonosyl methyl ester](n) + n H2O = [(1-&gt;4)-alpha-D-galacturonosyl](n) + n methanol + n H(+)</text>
        <dbReference type="Rhea" id="RHEA:22380"/>
        <dbReference type="Rhea" id="RHEA-COMP:14570"/>
        <dbReference type="Rhea" id="RHEA-COMP:14573"/>
        <dbReference type="ChEBI" id="CHEBI:15377"/>
        <dbReference type="ChEBI" id="CHEBI:15378"/>
        <dbReference type="ChEBI" id="CHEBI:17790"/>
        <dbReference type="ChEBI" id="CHEBI:140522"/>
        <dbReference type="ChEBI" id="CHEBI:140523"/>
        <dbReference type="EC" id="3.1.1.11"/>
    </reaction>
</comment>
<comment type="pathway">
    <text>Glycan metabolism; pectin degradation; 2-dehydro-3-deoxy-D-gluconate from pectin: step 1/5.</text>
</comment>
<comment type="subcellular location">
    <subcellularLocation>
        <location evidence="1">Secreted</location>
        <location evidence="1">Cell wall</location>
    </subcellularLocation>
</comment>
<comment type="tissue specificity">
    <text evidence="4">Expressed in siliques.</text>
</comment>
<comment type="developmental stage">
    <text evidence="4">Expressed during late developmental phases of siliques.</text>
</comment>
<comment type="miscellaneous">
    <text>The PMEI region may act as an autoinhibitory domain and prevent untimely PME activity during transport.</text>
</comment>
<comment type="similarity">
    <text evidence="5">In the N-terminal section; belongs to the PMEI family.</text>
</comment>
<comment type="similarity">
    <text evidence="5">In the C-terminal section; belongs to the pectinesterase family.</text>
</comment>
<organism>
    <name type="scientific">Arabidopsis thaliana</name>
    <name type="common">Mouse-ear cress</name>
    <dbReference type="NCBI Taxonomy" id="3702"/>
    <lineage>
        <taxon>Eukaryota</taxon>
        <taxon>Viridiplantae</taxon>
        <taxon>Streptophyta</taxon>
        <taxon>Embryophyta</taxon>
        <taxon>Tracheophyta</taxon>
        <taxon>Spermatophyta</taxon>
        <taxon>Magnoliopsida</taxon>
        <taxon>eudicotyledons</taxon>
        <taxon>Gunneridae</taxon>
        <taxon>Pentapetalae</taxon>
        <taxon>rosids</taxon>
        <taxon>malvids</taxon>
        <taxon>Brassicales</taxon>
        <taxon>Brassicaceae</taxon>
        <taxon>Camelineae</taxon>
        <taxon>Arabidopsis</taxon>
    </lineage>
</organism>
<evidence type="ECO:0000250" key="1"/>
<evidence type="ECO:0000255" key="2"/>
<evidence type="ECO:0000255" key="3">
    <source>
        <dbReference type="PROSITE-ProRule" id="PRU10040"/>
    </source>
</evidence>
<evidence type="ECO:0000269" key="4">
    <source>
    </source>
</evidence>
<evidence type="ECO:0000305" key="5"/>
<accession>Q3E989</accession>
<reference key="1">
    <citation type="journal article" date="2000" name="Nature">
        <title>Sequence and analysis of chromosome 5 of the plant Arabidopsis thaliana.</title>
        <authorList>
            <person name="Tabata S."/>
            <person name="Kaneko T."/>
            <person name="Nakamura Y."/>
            <person name="Kotani H."/>
            <person name="Kato T."/>
            <person name="Asamizu E."/>
            <person name="Miyajima N."/>
            <person name="Sasamoto S."/>
            <person name="Kimura T."/>
            <person name="Hosouchi T."/>
            <person name="Kawashima K."/>
            <person name="Kohara M."/>
            <person name="Matsumoto M."/>
            <person name="Matsuno A."/>
            <person name="Muraki A."/>
            <person name="Nakayama S."/>
            <person name="Nakazaki N."/>
            <person name="Naruo K."/>
            <person name="Okumura S."/>
            <person name="Shinpo S."/>
            <person name="Takeuchi C."/>
            <person name="Wada T."/>
            <person name="Watanabe A."/>
            <person name="Yamada M."/>
            <person name="Yasuda M."/>
            <person name="Sato S."/>
            <person name="de la Bastide M."/>
            <person name="Huang E."/>
            <person name="Spiegel L."/>
            <person name="Gnoj L."/>
            <person name="O'Shaughnessy A."/>
            <person name="Preston R."/>
            <person name="Habermann K."/>
            <person name="Murray J."/>
            <person name="Johnson D."/>
            <person name="Rohlfing T."/>
            <person name="Nelson J."/>
            <person name="Stoneking T."/>
            <person name="Pepin K."/>
            <person name="Spieth J."/>
            <person name="Sekhon M."/>
            <person name="Armstrong J."/>
            <person name="Becker M."/>
            <person name="Belter E."/>
            <person name="Cordum H."/>
            <person name="Cordes M."/>
            <person name="Courtney L."/>
            <person name="Courtney W."/>
            <person name="Dante M."/>
            <person name="Du H."/>
            <person name="Edwards J."/>
            <person name="Fryman J."/>
            <person name="Haakensen B."/>
            <person name="Lamar E."/>
            <person name="Latreille P."/>
            <person name="Leonard S."/>
            <person name="Meyer R."/>
            <person name="Mulvaney E."/>
            <person name="Ozersky P."/>
            <person name="Riley A."/>
            <person name="Strowmatt C."/>
            <person name="Wagner-McPherson C."/>
            <person name="Wollam A."/>
            <person name="Yoakum M."/>
            <person name="Bell M."/>
            <person name="Dedhia N."/>
            <person name="Parnell L."/>
            <person name="Shah R."/>
            <person name="Rodriguez M."/>
            <person name="Hoon See L."/>
            <person name="Vil D."/>
            <person name="Baker J."/>
            <person name="Kirchoff K."/>
            <person name="Toth K."/>
            <person name="King L."/>
            <person name="Bahret A."/>
            <person name="Miller B."/>
            <person name="Marra M.A."/>
            <person name="Martienssen R."/>
            <person name="McCombie W.R."/>
            <person name="Wilson R.K."/>
            <person name="Murphy G."/>
            <person name="Bancroft I."/>
            <person name="Volckaert G."/>
            <person name="Wambutt R."/>
            <person name="Duesterhoeft A."/>
            <person name="Stiekema W."/>
            <person name="Pohl T."/>
            <person name="Entian K.-D."/>
            <person name="Terryn N."/>
            <person name="Hartley N."/>
            <person name="Bent E."/>
            <person name="Johnson S."/>
            <person name="Langham S.-A."/>
            <person name="McCullagh B."/>
            <person name="Robben J."/>
            <person name="Grymonprez B."/>
            <person name="Zimmermann W."/>
            <person name="Ramsperger U."/>
            <person name="Wedler H."/>
            <person name="Balke K."/>
            <person name="Wedler E."/>
            <person name="Peters S."/>
            <person name="van Staveren M."/>
            <person name="Dirkse W."/>
            <person name="Mooijman P."/>
            <person name="Klein Lankhorst R."/>
            <person name="Weitzenegger T."/>
            <person name="Bothe G."/>
            <person name="Rose M."/>
            <person name="Hauf J."/>
            <person name="Berneiser S."/>
            <person name="Hempel S."/>
            <person name="Feldpausch M."/>
            <person name="Lamberth S."/>
            <person name="Villarroel R."/>
            <person name="Gielen J."/>
            <person name="Ardiles W."/>
            <person name="Bents O."/>
            <person name="Lemcke K."/>
            <person name="Kolesov G."/>
            <person name="Mayer K.F.X."/>
            <person name="Rudd S."/>
            <person name="Schoof H."/>
            <person name="Schueller C."/>
            <person name="Zaccaria P."/>
            <person name="Mewes H.-W."/>
            <person name="Bevan M."/>
            <person name="Fransz P.F."/>
        </authorList>
    </citation>
    <scope>NUCLEOTIDE SEQUENCE [LARGE SCALE GENOMIC DNA]</scope>
    <source>
        <strain>cv. Columbia</strain>
    </source>
</reference>
<reference key="2">
    <citation type="journal article" date="2017" name="Plant J.">
        <title>Araport11: a complete reannotation of the Arabidopsis thaliana reference genome.</title>
        <authorList>
            <person name="Cheng C.Y."/>
            <person name="Krishnakumar V."/>
            <person name="Chan A.P."/>
            <person name="Thibaud-Nissen F."/>
            <person name="Schobel S."/>
            <person name="Town C.D."/>
        </authorList>
    </citation>
    <scope>GENOME REANNOTATION</scope>
    <source>
        <strain>cv. Columbia</strain>
    </source>
</reference>
<reference key="3">
    <citation type="journal article" date="2004" name="Carbohydr. Res.">
        <title>Pectin methylesterases: sequence-structural features and phylogenetic relationships.</title>
        <authorList>
            <person name="Markovic O."/>
            <person name="Janecek S."/>
        </authorList>
    </citation>
    <scope>GENE FAMILY</scope>
    <scope>NOMENCLATURE</scope>
</reference>
<reference key="4">
    <citation type="journal article" date="2006" name="Planta">
        <title>Comprehensive expression profiling of the pectin methylesterase gene family during silique development in Arabidopsis thaliana.</title>
        <authorList>
            <person name="Louvet R."/>
            <person name="Cavel E."/>
            <person name="Gutierrez L."/>
            <person name="Guenin S."/>
            <person name="Roger D."/>
            <person name="Gillet F."/>
            <person name="Guerineau F."/>
            <person name="Pelloux J."/>
        </authorList>
    </citation>
    <scope>TISSUE SPECIFICITY</scope>
    <scope>DEVELOPMENTAL STAGE</scope>
</reference>
<sequence>MGVIDMVLFWVLLVNALLIVDASSRNMPFAYQNEMQRHCSSTKYTSLCVQNLREFRHGSLDGLDFVSFLVNKTISDSNLLIPPLSSSMGSSKLVSLEDSTYTLPSPSVSDSCERLMKMSTRRLRQAMEALNGSSRKRHTKHDVQTWLSAAMTFQQACKDSILDSGGSSSASAISHISQKMDHLSRLVSNSLTLVDTIMKNPKPKTKSTALPRWVTAGERRLLVGRARAHVVVAKDGSGDYRTVMEAVTAAHGNGKDLTVIVGDDSATGGTSVPDTATMTVTGDGFIARDIGIKNIAGPRGHQAIALSITSDQSVLYRCSISGYQDTLYAAALRQFYRECDIYGTIDFIFGNAAAVFQSCNIFLRRPHGVKAYNVILANGRTDQRQNTGFALHSCRIRTDSDLSPVKHKYSSYLGRPWRKYSRAIVMESYIDDAIAEGGWAGWLDSGDEVLKTLYFGEFKNYGPKARISKRVTWEGFHSIGFEEANYFSVVKRRNGEDVTNGFKYKFKIKIQI</sequence>